<reference key="1">
    <citation type="submission" date="2007-08" db="EMBL/GenBank/DDBJ databases">
        <authorList>
            <consortium name="The Citrobacter koseri Genome Sequencing Project"/>
            <person name="McClelland M."/>
            <person name="Sanderson E.K."/>
            <person name="Porwollik S."/>
            <person name="Spieth J."/>
            <person name="Clifton W.S."/>
            <person name="Latreille P."/>
            <person name="Courtney L."/>
            <person name="Wang C."/>
            <person name="Pepin K."/>
            <person name="Bhonagiri V."/>
            <person name="Nash W."/>
            <person name="Johnson M."/>
            <person name="Thiruvilangam P."/>
            <person name="Wilson R."/>
        </authorList>
    </citation>
    <scope>NUCLEOTIDE SEQUENCE [LARGE SCALE GENOMIC DNA]</scope>
    <source>
        <strain>ATCC BAA-895 / CDC 4225-83 / SGSC4696</strain>
    </source>
</reference>
<keyword id="KW-0028">Amino-acid biosynthesis</keyword>
<keyword id="KW-0100">Branched-chain amino acid biosynthesis</keyword>
<keyword id="KW-0963">Cytoplasm</keyword>
<keyword id="KW-0432">Leucine biosynthesis</keyword>
<keyword id="KW-0464">Manganese</keyword>
<keyword id="KW-0479">Metal-binding</keyword>
<keyword id="KW-1185">Reference proteome</keyword>
<keyword id="KW-0808">Transferase</keyword>
<feature type="chain" id="PRO_1000149168" description="2-isopropylmalate synthase">
    <location>
        <begin position="1"/>
        <end position="523"/>
    </location>
</feature>
<feature type="domain" description="Pyruvate carboxyltransferase" evidence="1">
    <location>
        <begin position="5"/>
        <end position="267"/>
    </location>
</feature>
<feature type="region of interest" description="Regulatory domain" evidence="1">
    <location>
        <begin position="392"/>
        <end position="523"/>
    </location>
</feature>
<feature type="binding site" evidence="1">
    <location>
        <position position="14"/>
    </location>
    <ligand>
        <name>Mn(2+)</name>
        <dbReference type="ChEBI" id="CHEBI:29035"/>
    </ligand>
</feature>
<feature type="binding site" evidence="1">
    <location>
        <position position="202"/>
    </location>
    <ligand>
        <name>Mn(2+)</name>
        <dbReference type="ChEBI" id="CHEBI:29035"/>
    </ligand>
</feature>
<feature type="binding site" evidence="1">
    <location>
        <position position="204"/>
    </location>
    <ligand>
        <name>Mn(2+)</name>
        <dbReference type="ChEBI" id="CHEBI:29035"/>
    </ligand>
</feature>
<feature type="binding site" evidence="1">
    <location>
        <position position="238"/>
    </location>
    <ligand>
        <name>Mn(2+)</name>
        <dbReference type="ChEBI" id="CHEBI:29035"/>
    </ligand>
</feature>
<organism>
    <name type="scientific">Citrobacter koseri (strain ATCC BAA-895 / CDC 4225-83 / SGSC4696)</name>
    <dbReference type="NCBI Taxonomy" id="290338"/>
    <lineage>
        <taxon>Bacteria</taxon>
        <taxon>Pseudomonadati</taxon>
        <taxon>Pseudomonadota</taxon>
        <taxon>Gammaproteobacteria</taxon>
        <taxon>Enterobacterales</taxon>
        <taxon>Enterobacteriaceae</taxon>
        <taxon>Citrobacter</taxon>
    </lineage>
</organism>
<gene>
    <name evidence="1" type="primary">leuA</name>
    <name type="ordered locus">CKO_03304</name>
</gene>
<comment type="function">
    <text evidence="1">Catalyzes the condensation of the acetyl group of acetyl-CoA with 3-methyl-2-oxobutanoate (2-ketoisovalerate) to form 3-carboxy-3-hydroxy-4-methylpentanoate (2-isopropylmalate).</text>
</comment>
<comment type="catalytic activity">
    <reaction evidence="1">
        <text>3-methyl-2-oxobutanoate + acetyl-CoA + H2O = (2S)-2-isopropylmalate + CoA + H(+)</text>
        <dbReference type="Rhea" id="RHEA:21524"/>
        <dbReference type="ChEBI" id="CHEBI:1178"/>
        <dbReference type="ChEBI" id="CHEBI:11851"/>
        <dbReference type="ChEBI" id="CHEBI:15377"/>
        <dbReference type="ChEBI" id="CHEBI:15378"/>
        <dbReference type="ChEBI" id="CHEBI:57287"/>
        <dbReference type="ChEBI" id="CHEBI:57288"/>
        <dbReference type="EC" id="2.3.3.13"/>
    </reaction>
</comment>
<comment type="cofactor">
    <cofactor evidence="1">
        <name>Mn(2+)</name>
        <dbReference type="ChEBI" id="CHEBI:29035"/>
    </cofactor>
</comment>
<comment type="pathway">
    <text evidence="1">Amino-acid biosynthesis; L-leucine biosynthesis; L-leucine from 3-methyl-2-oxobutanoate: step 1/4.</text>
</comment>
<comment type="subunit">
    <text evidence="1">Homodimer.</text>
</comment>
<comment type="subcellular location">
    <subcellularLocation>
        <location evidence="1">Cytoplasm</location>
    </subcellularLocation>
</comment>
<comment type="similarity">
    <text evidence="1">Belongs to the alpha-IPM synthase/homocitrate synthase family. LeuA type 1 subfamily.</text>
</comment>
<dbReference type="EC" id="2.3.3.13" evidence="1"/>
<dbReference type="EMBL" id="CP000822">
    <property type="protein sequence ID" value="ABV14388.1"/>
    <property type="molecule type" value="Genomic_DNA"/>
</dbReference>
<dbReference type="RefSeq" id="WP_012134091.1">
    <property type="nucleotide sequence ID" value="NC_009792.1"/>
</dbReference>
<dbReference type="SMR" id="A8ALM5"/>
<dbReference type="STRING" id="290338.CKO_03304"/>
<dbReference type="GeneID" id="45137072"/>
<dbReference type="KEGG" id="cko:CKO_03304"/>
<dbReference type="HOGENOM" id="CLU_022158_0_1_6"/>
<dbReference type="OrthoDB" id="9803573at2"/>
<dbReference type="UniPathway" id="UPA00048">
    <property type="reaction ID" value="UER00070"/>
</dbReference>
<dbReference type="Proteomes" id="UP000008148">
    <property type="component" value="Chromosome"/>
</dbReference>
<dbReference type="GO" id="GO:0005829">
    <property type="term" value="C:cytosol"/>
    <property type="evidence" value="ECO:0007669"/>
    <property type="project" value="TreeGrafter"/>
</dbReference>
<dbReference type="GO" id="GO:0003852">
    <property type="term" value="F:2-isopropylmalate synthase activity"/>
    <property type="evidence" value="ECO:0007669"/>
    <property type="project" value="UniProtKB-UniRule"/>
</dbReference>
<dbReference type="GO" id="GO:0003985">
    <property type="term" value="F:acetyl-CoA C-acetyltransferase activity"/>
    <property type="evidence" value="ECO:0007669"/>
    <property type="project" value="UniProtKB-UniRule"/>
</dbReference>
<dbReference type="GO" id="GO:0030145">
    <property type="term" value="F:manganese ion binding"/>
    <property type="evidence" value="ECO:0007669"/>
    <property type="project" value="UniProtKB-UniRule"/>
</dbReference>
<dbReference type="GO" id="GO:0009098">
    <property type="term" value="P:L-leucine biosynthetic process"/>
    <property type="evidence" value="ECO:0007669"/>
    <property type="project" value="UniProtKB-UniRule"/>
</dbReference>
<dbReference type="CDD" id="cd07940">
    <property type="entry name" value="DRE_TIM_IPMS"/>
    <property type="match status" value="1"/>
</dbReference>
<dbReference type="FunFam" id="1.10.238.260:FF:000001">
    <property type="entry name" value="2-isopropylmalate synthase"/>
    <property type="match status" value="1"/>
</dbReference>
<dbReference type="FunFam" id="3.20.20.70:FF:000010">
    <property type="entry name" value="2-isopropylmalate synthase"/>
    <property type="match status" value="1"/>
</dbReference>
<dbReference type="FunFam" id="3.30.160.270:FF:000001">
    <property type="entry name" value="2-isopropylmalate synthase"/>
    <property type="match status" value="1"/>
</dbReference>
<dbReference type="Gene3D" id="1.10.238.260">
    <property type="match status" value="1"/>
</dbReference>
<dbReference type="Gene3D" id="3.30.160.270">
    <property type="match status" value="1"/>
</dbReference>
<dbReference type="Gene3D" id="3.20.20.70">
    <property type="entry name" value="Aldolase class I"/>
    <property type="match status" value="1"/>
</dbReference>
<dbReference type="HAMAP" id="MF_01025">
    <property type="entry name" value="LeuA_type1"/>
    <property type="match status" value="1"/>
</dbReference>
<dbReference type="InterPro" id="IPR050073">
    <property type="entry name" value="2-IPM_HCS-like"/>
</dbReference>
<dbReference type="InterPro" id="IPR013709">
    <property type="entry name" value="2-isopropylmalate_synth_dimer"/>
</dbReference>
<dbReference type="InterPro" id="IPR002034">
    <property type="entry name" value="AIPM/Hcit_synth_CS"/>
</dbReference>
<dbReference type="InterPro" id="IPR013785">
    <property type="entry name" value="Aldolase_TIM"/>
</dbReference>
<dbReference type="InterPro" id="IPR054691">
    <property type="entry name" value="LeuA/HCS_post-cat"/>
</dbReference>
<dbReference type="InterPro" id="IPR036230">
    <property type="entry name" value="LeuA_allosteric_dom_sf"/>
</dbReference>
<dbReference type="InterPro" id="IPR005671">
    <property type="entry name" value="LeuA_bact_synth"/>
</dbReference>
<dbReference type="InterPro" id="IPR000891">
    <property type="entry name" value="PYR_CT"/>
</dbReference>
<dbReference type="NCBIfam" id="TIGR00973">
    <property type="entry name" value="leuA_bact"/>
    <property type="match status" value="1"/>
</dbReference>
<dbReference type="NCBIfam" id="NF002084">
    <property type="entry name" value="PRK00915.1-1"/>
    <property type="match status" value="1"/>
</dbReference>
<dbReference type="NCBIfam" id="NF002086">
    <property type="entry name" value="PRK00915.1-3"/>
    <property type="match status" value="1"/>
</dbReference>
<dbReference type="PANTHER" id="PTHR10277:SF9">
    <property type="entry name" value="2-ISOPROPYLMALATE SYNTHASE 1, CHLOROPLASTIC-RELATED"/>
    <property type="match status" value="1"/>
</dbReference>
<dbReference type="PANTHER" id="PTHR10277">
    <property type="entry name" value="HOMOCITRATE SYNTHASE-RELATED"/>
    <property type="match status" value="1"/>
</dbReference>
<dbReference type="Pfam" id="PF22617">
    <property type="entry name" value="HCS_D2"/>
    <property type="match status" value="1"/>
</dbReference>
<dbReference type="Pfam" id="PF00682">
    <property type="entry name" value="HMGL-like"/>
    <property type="match status" value="1"/>
</dbReference>
<dbReference type="Pfam" id="PF08502">
    <property type="entry name" value="LeuA_dimer"/>
    <property type="match status" value="1"/>
</dbReference>
<dbReference type="SMART" id="SM00917">
    <property type="entry name" value="LeuA_dimer"/>
    <property type="match status" value="1"/>
</dbReference>
<dbReference type="SUPFAM" id="SSF110921">
    <property type="entry name" value="2-isopropylmalate synthase LeuA, allosteric (dimerisation) domain"/>
    <property type="match status" value="1"/>
</dbReference>
<dbReference type="SUPFAM" id="SSF51569">
    <property type="entry name" value="Aldolase"/>
    <property type="match status" value="1"/>
</dbReference>
<dbReference type="PROSITE" id="PS00815">
    <property type="entry name" value="AIPM_HOMOCIT_SYNTH_1"/>
    <property type="match status" value="1"/>
</dbReference>
<dbReference type="PROSITE" id="PS00816">
    <property type="entry name" value="AIPM_HOMOCIT_SYNTH_2"/>
    <property type="match status" value="1"/>
</dbReference>
<dbReference type="PROSITE" id="PS50991">
    <property type="entry name" value="PYR_CT"/>
    <property type="match status" value="1"/>
</dbReference>
<proteinExistence type="inferred from homology"/>
<evidence type="ECO:0000255" key="1">
    <source>
        <dbReference type="HAMAP-Rule" id="MF_01025"/>
    </source>
</evidence>
<accession>A8ALM5</accession>
<sequence length="523" mass="57446">MSQQVIIFDTTLRDGEQALQASLSVKEKLQIALALERMGVDVMEVGFPVSSPGDFESVQTIARQVKNSRVCALARCVEKDIDVAAESLKVADAFRIHTFIATSPMHIATKLRSTLDEVIERAIYMVKRARNYTDDVEFSCEDAGRTPIDDLARVVEAAINAGAKTINIPDTVGYTMPFEFGGIISGLYERVPNIDKAIISVHTHDDLGLGVGNALAAVHAGARQVEGAMNGIGERAGNCSLEEVIMAIKVRQDILNVHTRINHQEIWRTSQLVSQICNMPIPANKAIVGSGAFAHSSGIHQDGVLKNRENYEIMTPESIGLNQIQLNLTSRSGRAAVKHRMDEMGYKESEYNLDNLYDAFLKLADKKGQVFDYDLEALAFINKQQEEPEHFRLDYFSVQSGSNDIATASVKLACGDDIKAEAANGNGPVDAIYQAINRITDYNIELVKYSLSAKGHGKDALGQVDIVANYNGRRFHGVGLATDIVESSAKAMVHVLNNIWRAAEVEKELQRKAQNKENNKETV</sequence>
<name>LEU1_CITK8</name>
<protein>
    <recommendedName>
        <fullName evidence="1">2-isopropylmalate synthase</fullName>
        <ecNumber evidence="1">2.3.3.13</ecNumber>
    </recommendedName>
    <alternativeName>
        <fullName evidence="1">Alpha-IPM synthase</fullName>
    </alternativeName>
    <alternativeName>
        <fullName evidence="1">Alpha-isopropylmalate synthase</fullName>
    </alternativeName>
</protein>